<protein>
    <recommendedName>
        <fullName>UV-stimulated scaffold protein A</fullName>
    </recommendedName>
</protein>
<reference key="1">
    <citation type="journal article" date="2004" name="Nature">
        <title>Genome sequence of the Brown Norway rat yields insights into mammalian evolution.</title>
        <authorList>
            <person name="Gibbs R.A."/>
            <person name="Weinstock G.M."/>
            <person name="Metzker M.L."/>
            <person name="Muzny D.M."/>
            <person name="Sodergren E.J."/>
            <person name="Scherer S."/>
            <person name="Scott G."/>
            <person name="Steffen D."/>
            <person name="Worley K.C."/>
            <person name="Burch P.E."/>
            <person name="Okwuonu G."/>
            <person name="Hines S."/>
            <person name="Lewis L."/>
            <person name="Deramo C."/>
            <person name="Delgado O."/>
            <person name="Dugan-Rocha S."/>
            <person name="Miner G."/>
            <person name="Morgan M."/>
            <person name="Hawes A."/>
            <person name="Gill R."/>
            <person name="Holt R.A."/>
            <person name="Adams M.D."/>
            <person name="Amanatides P.G."/>
            <person name="Baden-Tillson H."/>
            <person name="Barnstead M."/>
            <person name="Chin S."/>
            <person name="Evans C.A."/>
            <person name="Ferriera S."/>
            <person name="Fosler C."/>
            <person name="Glodek A."/>
            <person name="Gu Z."/>
            <person name="Jennings D."/>
            <person name="Kraft C.L."/>
            <person name="Nguyen T."/>
            <person name="Pfannkoch C.M."/>
            <person name="Sitter C."/>
            <person name="Sutton G.G."/>
            <person name="Venter J.C."/>
            <person name="Woodage T."/>
            <person name="Smith D."/>
            <person name="Lee H.-M."/>
            <person name="Gustafson E."/>
            <person name="Cahill P."/>
            <person name="Kana A."/>
            <person name="Doucette-Stamm L."/>
            <person name="Weinstock K."/>
            <person name="Fechtel K."/>
            <person name="Weiss R.B."/>
            <person name="Dunn D.M."/>
            <person name="Green E.D."/>
            <person name="Blakesley R.W."/>
            <person name="Bouffard G.G."/>
            <person name="De Jong P.J."/>
            <person name="Osoegawa K."/>
            <person name="Zhu B."/>
            <person name="Marra M."/>
            <person name="Schein J."/>
            <person name="Bosdet I."/>
            <person name="Fjell C."/>
            <person name="Jones S."/>
            <person name="Krzywinski M."/>
            <person name="Mathewson C."/>
            <person name="Siddiqui A."/>
            <person name="Wye N."/>
            <person name="McPherson J."/>
            <person name="Zhao S."/>
            <person name="Fraser C.M."/>
            <person name="Shetty J."/>
            <person name="Shatsman S."/>
            <person name="Geer K."/>
            <person name="Chen Y."/>
            <person name="Abramzon S."/>
            <person name="Nierman W.C."/>
            <person name="Havlak P.H."/>
            <person name="Chen R."/>
            <person name="Durbin K.J."/>
            <person name="Egan A."/>
            <person name="Ren Y."/>
            <person name="Song X.-Z."/>
            <person name="Li B."/>
            <person name="Liu Y."/>
            <person name="Qin X."/>
            <person name="Cawley S."/>
            <person name="Cooney A.J."/>
            <person name="D'Souza L.M."/>
            <person name="Martin K."/>
            <person name="Wu J.Q."/>
            <person name="Gonzalez-Garay M.L."/>
            <person name="Jackson A.R."/>
            <person name="Kalafus K.J."/>
            <person name="McLeod M.P."/>
            <person name="Milosavljevic A."/>
            <person name="Virk D."/>
            <person name="Volkov A."/>
            <person name="Wheeler D.A."/>
            <person name="Zhang Z."/>
            <person name="Bailey J.A."/>
            <person name="Eichler E.E."/>
            <person name="Tuzun E."/>
            <person name="Birney E."/>
            <person name="Mongin E."/>
            <person name="Ureta-Vidal A."/>
            <person name="Woodwark C."/>
            <person name="Zdobnov E."/>
            <person name="Bork P."/>
            <person name="Suyama M."/>
            <person name="Torrents D."/>
            <person name="Alexandersson M."/>
            <person name="Trask B.J."/>
            <person name="Young J.M."/>
            <person name="Huang H."/>
            <person name="Wang H."/>
            <person name="Xing H."/>
            <person name="Daniels S."/>
            <person name="Gietzen D."/>
            <person name="Schmidt J."/>
            <person name="Stevens K."/>
            <person name="Vitt U."/>
            <person name="Wingrove J."/>
            <person name="Camara F."/>
            <person name="Mar Alba M."/>
            <person name="Abril J.F."/>
            <person name="Guigo R."/>
            <person name="Smit A."/>
            <person name="Dubchak I."/>
            <person name="Rubin E.M."/>
            <person name="Couronne O."/>
            <person name="Poliakov A."/>
            <person name="Huebner N."/>
            <person name="Ganten D."/>
            <person name="Goesele C."/>
            <person name="Hummel O."/>
            <person name="Kreitler T."/>
            <person name="Lee Y.-A."/>
            <person name="Monti J."/>
            <person name="Schulz H."/>
            <person name="Zimdahl H."/>
            <person name="Himmelbauer H."/>
            <person name="Lehrach H."/>
            <person name="Jacob H.J."/>
            <person name="Bromberg S."/>
            <person name="Gullings-Handley J."/>
            <person name="Jensen-Seaman M.I."/>
            <person name="Kwitek A.E."/>
            <person name="Lazar J."/>
            <person name="Pasko D."/>
            <person name="Tonellato P.J."/>
            <person name="Twigger S."/>
            <person name="Ponting C.P."/>
            <person name="Duarte J.M."/>
            <person name="Rice S."/>
            <person name="Goodstadt L."/>
            <person name="Beatson S.A."/>
            <person name="Emes R.D."/>
            <person name="Winter E.E."/>
            <person name="Webber C."/>
            <person name="Brandt P."/>
            <person name="Nyakatura G."/>
            <person name="Adetobi M."/>
            <person name="Chiaromonte F."/>
            <person name="Elnitski L."/>
            <person name="Eswara P."/>
            <person name="Hardison R.C."/>
            <person name="Hou M."/>
            <person name="Kolbe D."/>
            <person name="Makova K."/>
            <person name="Miller W."/>
            <person name="Nekrutenko A."/>
            <person name="Riemer C."/>
            <person name="Schwartz S."/>
            <person name="Taylor J."/>
            <person name="Yang S."/>
            <person name="Zhang Y."/>
            <person name="Lindpaintner K."/>
            <person name="Andrews T.D."/>
            <person name="Caccamo M."/>
            <person name="Clamp M."/>
            <person name="Clarke L."/>
            <person name="Curwen V."/>
            <person name="Durbin R.M."/>
            <person name="Eyras E."/>
            <person name="Searle S.M."/>
            <person name="Cooper G.M."/>
            <person name="Batzoglou S."/>
            <person name="Brudno M."/>
            <person name="Sidow A."/>
            <person name="Stone E.A."/>
            <person name="Payseur B.A."/>
            <person name="Bourque G."/>
            <person name="Lopez-Otin C."/>
            <person name="Puente X.S."/>
            <person name="Chakrabarti K."/>
            <person name="Chatterji S."/>
            <person name="Dewey C."/>
            <person name="Pachter L."/>
            <person name="Bray N."/>
            <person name="Yap V.B."/>
            <person name="Caspi A."/>
            <person name="Tesler G."/>
            <person name="Pevzner P.A."/>
            <person name="Haussler D."/>
            <person name="Roskin K.M."/>
            <person name="Baertsch R."/>
            <person name="Clawson H."/>
            <person name="Furey T.S."/>
            <person name="Hinrichs A.S."/>
            <person name="Karolchik D."/>
            <person name="Kent W.J."/>
            <person name="Rosenbloom K.R."/>
            <person name="Trumbower H."/>
            <person name="Weirauch M."/>
            <person name="Cooper D.N."/>
            <person name="Stenson P.D."/>
            <person name="Ma B."/>
            <person name="Brent M."/>
            <person name="Arumugam M."/>
            <person name="Shteynberg D."/>
            <person name="Copley R.R."/>
            <person name="Taylor M.S."/>
            <person name="Riethman H."/>
            <person name="Mudunuri U."/>
            <person name="Peterson J."/>
            <person name="Guyer M."/>
            <person name="Felsenfeld A."/>
            <person name="Old S."/>
            <person name="Mockrin S."/>
            <person name="Collins F.S."/>
        </authorList>
    </citation>
    <scope>NUCLEOTIDE SEQUENCE [LARGE SCALE GENOMIC DNA]</scope>
    <source>
        <strain>Brown Norway</strain>
    </source>
</reference>
<reference key="2">
    <citation type="submission" date="2005-07" db="EMBL/GenBank/DDBJ databases">
        <authorList>
            <person name="Mural R.J."/>
            <person name="Adams M.D."/>
            <person name="Myers E.W."/>
            <person name="Smith H.O."/>
            <person name="Venter J.C."/>
        </authorList>
    </citation>
    <scope>NUCLEOTIDE SEQUENCE [LARGE SCALE GENOMIC DNA]</scope>
    <source>
        <strain>Brown Norway</strain>
    </source>
</reference>
<reference key="3">
    <citation type="journal article" date="1996" name="Genome Res.">
        <title>Normalization and subtraction: two approaches to facilitate gene discovery.</title>
        <authorList>
            <person name="Bonaldo M.F."/>
            <person name="Lennon G."/>
            <person name="Soares M.B."/>
        </authorList>
    </citation>
    <scope>NUCLEOTIDE SEQUENCE [LARGE SCALE MRNA] OF 596-720</scope>
    <source>
        <strain>Sprague-Dawley</strain>
    </source>
</reference>
<reference key="4">
    <citation type="journal article" date="2012" name="Nat. Commun.">
        <title>Quantitative maps of protein phosphorylation sites across 14 different rat organs and tissues.</title>
        <authorList>
            <person name="Lundby A."/>
            <person name="Secher A."/>
            <person name="Lage K."/>
            <person name="Nordsborg N.B."/>
            <person name="Dmytriyev A."/>
            <person name="Lundby C."/>
            <person name="Olsen J.V."/>
        </authorList>
    </citation>
    <scope>PHOSPHORYLATION [LARGE SCALE ANALYSIS] AT SER-406</scope>
    <scope>IDENTIFICATION BY MASS SPECTROMETRY [LARGE SCALE ANALYSIS]</scope>
</reference>
<evidence type="ECO:0000250" key="1">
    <source>
        <dbReference type="UniProtKB" id="Q2YD98"/>
    </source>
</evidence>
<evidence type="ECO:0000255" key="2"/>
<evidence type="ECO:0000255" key="3">
    <source>
        <dbReference type="PROSITE-ProRule" id="PRU01403"/>
    </source>
</evidence>
<evidence type="ECO:0000256" key="4">
    <source>
        <dbReference type="SAM" id="MobiDB-lite"/>
    </source>
</evidence>
<evidence type="ECO:0000305" key="5"/>
<evidence type="ECO:0007744" key="6">
    <source>
    </source>
</evidence>
<name>UVSSA_RAT</name>
<sequence>MDQKLSQLIEELTTSGESQLNAQKMKELKKICKSSEEQLSHAYRLLMTQLTQDHAEIRLSAFQIVDELFTRSHQFRVLLVSDFQEFLELTLGTDNDHPLPPPREAAQRLRQAAMQAVEGWNEKFGEAYKKLALGYHFLKHTKKVDFRDINVRTLAERKREEEKQKHLDKIHRESADRAKREMEEMSDEIGCCLTEVENCFRLLVPLDLGPYREDKFFGEASGIAEDHAPCAWSPDLATPRGSGLSGPQDEEQPCCSKDLVASAHHAGSAVGLKAPAPAATEDPCRDEDRHSEHSDPEDFLRSHGLGSHKYTLDVELPSDGLKVQENEDNLAVLHAARDSLKLIQNKFLPAVCSWVQRFTRAGIYSGHLKQAIDLKMELELALKKYEELNIEPGRGQRSRTEALEDSEEEDQDFVEVPEKEGYEPRIPDHLRAEYGLEPKAPLKTLEKHTAVCSVQERTRRRREEEASDPTSAAAQMLRLQDCLSSPSSSSTRGPLGPEEAQKQAERARAPMVPFGVDLCYWGQEQLTAGKILKSDSQHRFWKPHEVEEEVDSAHVSEMLHSRHITFSGKFEPVQHKCRALRPNGRLCERQDRLKCPFHGKIIPRDDKGQPLNPEDRAREQRQQLQQQRAHPDWQDPEFMKDVEAATGVDLGSSKYSKKGKGKKKKHPNLTDLRERANTARARLEKKVFAKGAVQRVVAAMNQMDQKKHEKFANQFNYALK</sequence>
<dbReference type="EMBL" id="CH473963">
    <property type="protein sequence ID" value="EDM00129.1"/>
    <property type="status" value="ALT_SEQ"/>
    <property type="molecule type" value="Genomic_DNA"/>
</dbReference>
<dbReference type="EMBL" id="BE096344">
    <property type="status" value="NOT_ANNOTATED_CDS"/>
    <property type="molecule type" value="mRNA"/>
</dbReference>
<dbReference type="RefSeq" id="NP_001128030.1">
    <property type="nucleotide sequence ID" value="NM_001134558.1"/>
</dbReference>
<dbReference type="RefSeq" id="XP_006251383.1">
    <property type="nucleotide sequence ID" value="XM_006251321.5"/>
</dbReference>
<dbReference type="RefSeq" id="XP_006251385.1">
    <property type="nucleotide sequence ID" value="XM_006251323.5"/>
</dbReference>
<dbReference type="RefSeq" id="XP_006251386.1">
    <property type="nucleotide sequence ID" value="XM_006251324.5"/>
</dbReference>
<dbReference type="RefSeq" id="XP_006251387.1">
    <property type="nucleotide sequence ID" value="XM_006251325.5"/>
</dbReference>
<dbReference type="RefSeq" id="XP_038948061.1">
    <property type="nucleotide sequence ID" value="XM_039092133.2"/>
</dbReference>
<dbReference type="SMR" id="D3ZND0"/>
<dbReference type="FunCoup" id="D3ZND0">
    <property type="interactions" value="2246"/>
</dbReference>
<dbReference type="STRING" id="10116.ENSRNOP00000006841"/>
<dbReference type="iPTMnet" id="D3ZND0"/>
<dbReference type="PhosphoSitePlus" id="D3ZND0"/>
<dbReference type="PaxDb" id="10116-ENSRNOP00000006841"/>
<dbReference type="PeptideAtlas" id="D3ZND0"/>
<dbReference type="Ensembl" id="ENSRNOT00000006841.6">
    <property type="protein sequence ID" value="ENSRNOP00000006841.6"/>
    <property type="gene ID" value="ENSRNOG00000005122.6"/>
</dbReference>
<dbReference type="GeneID" id="314061"/>
<dbReference type="KEGG" id="rno:314061"/>
<dbReference type="UCSC" id="RGD:1306371">
    <property type="organism name" value="rat"/>
</dbReference>
<dbReference type="AGR" id="RGD:1306371"/>
<dbReference type="CTD" id="57654"/>
<dbReference type="RGD" id="1306371">
    <property type="gene designation" value="Uvssa"/>
</dbReference>
<dbReference type="eggNOG" id="KOG2374">
    <property type="taxonomic scope" value="Eukaryota"/>
</dbReference>
<dbReference type="GeneTree" id="ENSGT00390000000377"/>
<dbReference type="InParanoid" id="D3ZND0"/>
<dbReference type="OMA" id="EEHAEMR"/>
<dbReference type="TreeFam" id="TF321660"/>
<dbReference type="Reactome" id="R-RNO-6781823">
    <property type="pathway name" value="Formation of TC-NER Pre-Incision Complex"/>
</dbReference>
<dbReference type="Reactome" id="R-RNO-6782135">
    <property type="pathway name" value="Dual incision in TC-NER"/>
</dbReference>
<dbReference type="Reactome" id="R-RNO-6782210">
    <property type="pathway name" value="Gap-filling DNA repair synthesis and ligation in TC-NER"/>
</dbReference>
<dbReference type="PRO" id="PR:D3ZND0"/>
<dbReference type="Proteomes" id="UP000002494">
    <property type="component" value="Chromosome 14"/>
</dbReference>
<dbReference type="Proteomes" id="UP000234681">
    <property type="component" value="Chromosome 14"/>
</dbReference>
<dbReference type="GO" id="GO:0005694">
    <property type="term" value="C:chromosome"/>
    <property type="evidence" value="ECO:0000250"/>
    <property type="project" value="UniProtKB"/>
</dbReference>
<dbReference type="GO" id="GO:0005634">
    <property type="term" value="C:nucleus"/>
    <property type="evidence" value="ECO:0000250"/>
    <property type="project" value="UniProtKB"/>
</dbReference>
<dbReference type="GO" id="GO:0090734">
    <property type="term" value="C:site of DNA damage"/>
    <property type="evidence" value="ECO:0000250"/>
    <property type="project" value="UniProtKB"/>
</dbReference>
<dbReference type="GO" id="GO:0140463">
    <property type="term" value="F:chromatin-protein adaptor activity"/>
    <property type="evidence" value="ECO:0000250"/>
    <property type="project" value="UniProtKB"/>
</dbReference>
<dbReference type="GO" id="GO:0000993">
    <property type="term" value="F:RNA polymerase II complex binding"/>
    <property type="evidence" value="ECO:0000250"/>
    <property type="project" value="UniProtKB"/>
</dbReference>
<dbReference type="GO" id="GO:0140870">
    <property type="term" value="F:RNA polymerase inhibitor activity"/>
    <property type="evidence" value="ECO:0000250"/>
    <property type="project" value="UniProtKB"/>
</dbReference>
<dbReference type="GO" id="GO:0016567">
    <property type="term" value="P:protein ubiquitination"/>
    <property type="evidence" value="ECO:0000250"/>
    <property type="project" value="UniProtKB"/>
</dbReference>
<dbReference type="GO" id="GO:0009411">
    <property type="term" value="P:response to UV"/>
    <property type="evidence" value="ECO:0000250"/>
    <property type="project" value="UniProtKB"/>
</dbReference>
<dbReference type="GO" id="GO:0006283">
    <property type="term" value="P:transcription-coupled nucleotide-excision repair"/>
    <property type="evidence" value="ECO:0000250"/>
    <property type="project" value="UniProtKB"/>
</dbReference>
<dbReference type="FunFam" id="1.25.40.90:FF:000061">
    <property type="entry name" value="UV-stimulated scaffold protein A"/>
    <property type="match status" value="1"/>
</dbReference>
<dbReference type="Gene3D" id="1.25.40.90">
    <property type="match status" value="1"/>
</dbReference>
<dbReference type="InterPro" id="IPR008942">
    <property type="entry name" value="ENTH_VHS"/>
</dbReference>
<dbReference type="InterPro" id="IPR018610">
    <property type="entry name" value="UVSSA"/>
</dbReference>
<dbReference type="InterPro" id="IPR049431">
    <property type="entry name" value="UVSSA_C"/>
</dbReference>
<dbReference type="InterPro" id="IPR049408">
    <property type="entry name" value="UVSSA_N_a-solenoid_rpt"/>
</dbReference>
<dbReference type="PANTHER" id="PTHR28670">
    <property type="entry name" value="UV-STIMULATED SCAFFOLD PROTEIN A"/>
    <property type="match status" value="1"/>
</dbReference>
<dbReference type="PANTHER" id="PTHR28670:SF1">
    <property type="entry name" value="UV-STIMULATED SCAFFOLD PROTEIN A"/>
    <property type="match status" value="1"/>
</dbReference>
<dbReference type="Pfam" id="PF09740">
    <property type="entry name" value="DUF2043"/>
    <property type="match status" value="1"/>
</dbReference>
<dbReference type="Pfam" id="PF20867">
    <property type="entry name" value="UVSSA_N"/>
    <property type="match status" value="1"/>
</dbReference>
<dbReference type="SUPFAM" id="SSF48464">
    <property type="entry name" value="ENTH/VHS domain"/>
    <property type="match status" value="1"/>
</dbReference>
<dbReference type="PROSITE" id="PS52058">
    <property type="entry name" value="ZF_UVSSA"/>
    <property type="match status" value="1"/>
</dbReference>
<keyword id="KW-0158">Chromosome</keyword>
<keyword id="KW-0175">Coiled coil</keyword>
<keyword id="KW-0227">DNA damage</keyword>
<keyword id="KW-0234">DNA repair</keyword>
<keyword id="KW-1017">Isopeptide bond</keyword>
<keyword id="KW-0479">Metal-binding</keyword>
<keyword id="KW-0597">Phosphoprotein</keyword>
<keyword id="KW-1185">Reference proteome</keyword>
<keyword id="KW-0832">Ubl conjugation</keyword>
<keyword id="KW-0862">Zinc</keyword>
<keyword id="KW-0863">Zinc-finger</keyword>
<gene>
    <name type="primary">Uvssa</name>
</gene>
<comment type="function">
    <text evidence="1">Factor involved in transcription-coupled nucleotide excision repair (TC-NER), a mechanism that rapidly removes RNA polymerase II-blocking lesions from the transcribed strand of active genes. Acts as a key adapter that promotes recruitment of factors involved in TC-NER. Facilitates the ubiquitination of the elongating form of RNA polymerase II (RNA pol IIo) at DNA damage sites, thereby promoting RNA pol IIo backtracking and access by the TC-NER machinery to lesion sites. Also promotes stabilization of ERCC6/CSB by recruiting deubiquitinating enzyme USP7 to TC-NER complexes, preventing UV-induced degradation of ERCC6 by the proteasome. Mediates the recruitment of the TFIIH complex and other factors that are required for nucleotide excision repair to RNA polymerase II. Also required to inactivate stalled RNA polymerase II by blocking the access of TCEA1/TFIIS, thereby preventing reactivation of RNA polymerase II. Not involved in processing oxidative damage.</text>
</comment>
<comment type="subunit">
    <text evidence="1">Interacts with the elongating form of RNA polymerase II (RNA pol IIo) during transcription stress. Interacts with the TFIIH complex during transcription stress. Interacts with ERCC6. Interacts with ERCC8. Interacts with USP7.</text>
</comment>
<comment type="subcellular location">
    <subcellularLocation>
        <location evidence="1">Chromosome</location>
    </subcellularLocation>
    <text evidence="1">Accumulates at UV DNA damage sites.</text>
</comment>
<comment type="PTM">
    <text evidence="1">Monoubiquitinated at Lys-419 in response to transcription stress; this promotes efficient transfer of TFIIH to stalled RNA polymerase II.</text>
</comment>
<comment type="similarity">
    <text evidence="5">Belongs to the UVSSA family.</text>
</comment>
<comment type="sequence caution" evidence="5">
    <conflict type="erroneous gene model prediction">
        <sequence resource="EMBL-CDS" id="EDM00129"/>
    </conflict>
</comment>
<organism>
    <name type="scientific">Rattus norvegicus</name>
    <name type="common">Rat</name>
    <dbReference type="NCBI Taxonomy" id="10116"/>
    <lineage>
        <taxon>Eukaryota</taxon>
        <taxon>Metazoa</taxon>
        <taxon>Chordata</taxon>
        <taxon>Craniata</taxon>
        <taxon>Vertebrata</taxon>
        <taxon>Euteleostomi</taxon>
        <taxon>Mammalia</taxon>
        <taxon>Eutheria</taxon>
        <taxon>Euarchontoglires</taxon>
        <taxon>Glires</taxon>
        <taxon>Rodentia</taxon>
        <taxon>Myomorpha</taxon>
        <taxon>Muroidea</taxon>
        <taxon>Muridae</taxon>
        <taxon>Murinae</taxon>
        <taxon>Rattus</taxon>
    </lineage>
</organism>
<feature type="chain" id="PRO_0000417994" description="UV-stimulated scaffold protein A">
    <location>
        <begin position="1"/>
        <end position="720"/>
    </location>
</feature>
<feature type="zinc finger region" description="UVSSA-type" evidence="3">
    <location>
        <begin position="574"/>
        <end position="601"/>
    </location>
</feature>
<feature type="region of interest" description="VHS-like">
    <location>
        <begin position="2"/>
        <end position="145"/>
    </location>
</feature>
<feature type="region of interest" description="Disordered" evidence="4">
    <location>
        <begin position="234"/>
        <end position="253"/>
    </location>
</feature>
<feature type="region of interest" description="Disordered" evidence="4">
    <location>
        <begin position="269"/>
        <end position="304"/>
    </location>
</feature>
<feature type="region of interest" description="Disordered" evidence="4">
    <location>
        <begin position="392"/>
        <end position="415"/>
    </location>
</feature>
<feature type="region of interest" description="Disordered" evidence="4">
    <location>
        <begin position="451"/>
        <end position="507"/>
    </location>
</feature>
<feature type="region of interest" description="Disordered" evidence="4">
    <location>
        <begin position="598"/>
        <end position="637"/>
    </location>
</feature>
<feature type="region of interest" description="Disordered" evidence="4">
    <location>
        <begin position="649"/>
        <end position="669"/>
    </location>
</feature>
<feature type="coiled-coil region" evidence="2">
    <location>
        <begin position="169"/>
        <end position="198"/>
    </location>
</feature>
<feature type="compositionally biased region" description="Basic and acidic residues" evidence="4">
    <location>
        <begin position="282"/>
        <end position="301"/>
    </location>
</feature>
<feature type="compositionally biased region" description="Acidic residues" evidence="4">
    <location>
        <begin position="403"/>
        <end position="415"/>
    </location>
</feature>
<feature type="compositionally biased region" description="Basic and acidic residues" evidence="4">
    <location>
        <begin position="602"/>
        <end position="621"/>
    </location>
</feature>
<feature type="compositionally biased region" description="Basic residues" evidence="4">
    <location>
        <begin position="655"/>
        <end position="667"/>
    </location>
</feature>
<feature type="binding site" evidence="3">
    <location>
        <position position="577"/>
    </location>
    <ligand>
        <name>Zn(2+)</name>
        <dbReference type="ChEBI" id="CHEBI:29105"/>
    </ligand>
</feature>
<feature type="binding site" evidence="3">
    <location>
        <position position="587"/>
    </location>
    <ligand>
        <name>Zn(2+)</name>
        <dbReference type="ChEBI" id="CHEBI:29105"/>
    </ligand>
</feature>
<feature type="binding site" evidence="3">
    <location>
        <position position="595"/>
    </location>
    <ligand>
        <name>Zn(2+)</name>
        <dbReference type="ChEBI" id="CHEBI:29105"/>
    </ligand>
</feature>
<feature type="binding site" evidence="3">
    <location>
        <position position="598"/>
    </location>
    <ligand>
        <name>Zn(2+)</name>
        <dbReference type="ChEBI" id="CHEBI:29105"/>
    </ligand>
</feature>
<feature type="modified residue" description="Phosphoserine" evidence="1">
    <location>
        <position position="294"/>
    </location>
</feature>
<feature type="modified residue" description="Phosphoserine" evidence="6">
    <location>
        <position position="406"/>
    </location>
</feature>
<feature type="cross-link" description="Glycyl lysine isopeptide (Lys-Gly) (interchain with G-Cter in ubiquitin)" evidence="1">
    <location>
        <position position="419"/>
    </location>
</feature>
<feature type="sequence conflict" description="In Ref. 3; BE096344." evidence="5" ref="3">
    <original>KI</original>
    <variation>NM</variation>
    <location>
        <begin position="600"/>
        <end position="601"/>
    </location>
</feature>
<feature type="sequence conflict" description="In Ref. 3; BE096344." evidence="5" ref="3">
    <original>D</original>
    <variation>G</variation>
    <location>
        <position position="605"/>
    </location>
</feature>
<feature type="sequence conflict" description="In Ref. 3; BE096344." evidence="5" ref="3">
    <original>L</original>
    <variation>F</variation>
    <location>
        <position position="611"/>
    </location>
</feature>
<feature type="sequence conflict" description="In Ref. 3; BE096344." evidence="5" ref="3">
    <original>A</original>
    <variation>V</variation>
    <location>
        <position position="617"/>
    </location>
</feature>
<feature type="sequence conflict" description="In Ref. 3; BE096344." evidence="5" ref="3">
    <original>LQ</original>
    <variation>VL</variation>
    <location>
        <begin position="624"/>
        <end position="625"/>
    </location>
</feature>
<feature type="sequence conflict" description="In Ref. 3; BE096344." evidence="5" ref="3">
    <original>D</original>
    <variation>G</variation>
    <location>
        <position position="635"/>
    </location>
</feature>
<feature type="sequence conflict" description="In Ref. 3; BE096344." evidence="5" ref="3">
    <original>A</original>
    <variation>S</variation>
    <location>
        <position position="645"/>
    </location>
</feature>
<feature type="sequence conflict" description="In Ref. 3; BE096344." evidence="5" ref="3">
    <original>S</original>
    <variation>F</variation>
    <location>
        <position position="653"/>
    </location>
</feature>
<feature type="sequence conflict" description="In Ref. 3; BE096344." evidence="5" ref="3">
    <original>K</original>
    <variation>N</variation>
    <location>
        <position position="665"/>
    </location>
</feature>
<feature type="sequence conflict" description="In Ref. 3; BE096344." evidence="5" ref="3">
    <original>ANT</original>
    <variation>SNI</variation>
    <location>
        <begin position="676"/>
        <end position="678"/>
    </location>
</feature>
<feature type="sequence conflict" description="In Ref. 3; BE096344." evidence="5" ref="3">
    <original>H</original>
    <variation>P</variation>
    <location>
        <position position="708"/>
    </location>
</feature>
<accession>D3ZND0</accession>
<proteinExistence type="evidence at protein level"/>